<comment type="function">
    <text evidence="1">Catalyzes the formation of CDP-2,3-bis-(O-geranylgeranyl)-sn-glycerol (CDP-archaeol) from 2,3-bis-(O-geranylgeranyl)-sn-glycerol 1-phosphate (DGGGP) and CTP. This reaction is the third ether-bond-formation step in the biosynthesis of archaeal membrane lipids.</text>
</comment>
<comment type="catalytic activity">
    <reaction evidence="1">
        <text>2,3-bis-O-(geranylgeranyl)-sn-glycerol 1-phosphate + CTP + H(+) = CDP-2,3-bis-O-(geranylgeranyl)-sn-glycerol + diphosphate</text>
        <dbReference type="Rhea" id="RHEA:25690"/>
        <dbReference type="ChEBI" id="CHEBI:15378"/>
        <dbReference type="ChEBI" id="CHEBI:33019"/>
        <dbReference type="ChEBI" id="CHEBI:37563"/>
        <dbReference type="ChEBI" id="CHEBI:58837"/>
        <dbReference type="ChEBI" id="CHEBI:58838"/>
        <dbReference type="EC" id="2.7.7.67"/>
    </reaction>
</comment>
<comment type="cofactor">
    <cofactor evidence="1">
        <name>Mg(2+)</name>
        <dbReference type="ChEBI" id="CHEBI:18420"/>
    </cofactor>
</comment>
<comment type="pathway">
    <text evidence="1">Membrane lipid metabolism; glycerophospholipid metabolism.</text>
</comment>
<comment type="subcellular location">
    <subcellularLocation>
        <location evidence="1">Cell membrane</location>
        <topology evidence="1">Multi-pass membrane protein</topology>
    </subcellularLocation>
</comment>
<comment type="similarity">
    <text evidence="1">Belongs to the CDP-archaeol synthase family.</text>
</comment>
<proteinExistence type="inferred from homology"/>
<sequence>MDLINLLFVSFWFILPAYTANAMACIFGGGKPVDLNKNFIDQKRLIGNGVTYRGTFFGVFFGIVTAIIQYLVSNLGFKFILSFNFTLIEYVIIGFLLSFGALFGDMFGSFLKRRLGFKQGQSAPVLDQITFIVFALIFVSYYYLVPSKISITLLILSPVVHILSNIIAYKLGLKKVWW</sequence>
<gene>
    <name evidence="1" type="primary">carS</name>
    <name type="ordered locus">Mevan_1000</name>
</gene>
<feature type="chain" id="PRO_1000065247" description="CDP-archaeol synthase">
    <location>
        <begin position="1"/>
        <end position="178"/>
    </location>
</feature>
<feature type="transmembrane region" description="Helical" evidence="1">
    <location>
        <begin position="7"/>
        <end position="27"/>
    </location>
</feature>
<feature type="transmembrane region" description="Helical" evidence="1">
    <location>
        <begin position="56"/>
        <end position="76"/>
    </location>
</feature>
<feature type="transmembrane region" description="Helical" evidence="1">
    <location>
        <begin position="91"/>
        <end position="111"/>
    </location>
</feature>
<feature type="transmembrane region" description="Helical" evidence="1">
    <location>
        <begin position="125"/>
        <end position="145"/>
    </location>
</feature>
<feature type="transmembrane region" description="Helical" evidence="1">
    <location>
        <begin position="149"/>
        <end position="169"/>
    </location>
</feature>
<name>CDPAS_METVS</name>
<keyword id="KW-1003">Cell membrane</keyword>
<keyword id="KW-0444">Lipid biosynthesis</keyword>
<keyword id="KW-0443">Lipid metabolism</keyword>
<keyword id="KW-0460">Magnesium</keyword>
<keyword id="KW-0472">Membrane</keyword>
<keyword id="KW-0594">Phospholipid biosynthesis</keyword>
<keyword id="KW-1208">Phospholipid metabolism</keyword>
<keyword id="KW-0808">Transferase</keyword>
<keyword id="KW-0812">Transmembrane</keyword>
<keyword id="KW-1133">Transmembrane helix</keyword>
<reference key="1">
    <citation type="submission" date="2007-06" db="EMBL/GenBank/DDBJ databases">
        <title>Complete sequence of Methanococcus vannielii SB.</title>
        <authorList>
            <consortium name="US DOE Joint Genome Institute"/>
            <person name="Copeland A."/>
            <person name="Lucas S."/>
            <person name="Lapidus A."/>
            <person name="Barry K."/>
            <person name="Glavina del Rio T."/>
            <person name="Dalin E."/>
            <person name="Tice H."/>
            <person name="Pitluck S."/>
            <person name="Chain P."/>
            <person name="Malfatti S."/>
            <person name="Shin M."/>
            <person name="Vergez L."/>
            <person name="Schmutz J."/>
            <person name="Larimer F."/>
            <person name="Land M."/>
            <person name="Hauser L."/>
            <person name="Kyrpides N."/>
            <person name="Anderson I."/>
            <person name="Sieprawska-Lupa M."/>
            <person name="Whitman W.B."/>
            <person name="Richardson P."/>
        </authorList>
    </citation>
    <scope>NUCLEOTIDE SEQUENCE [LARGE SCALE GENOMIC DNA]</scope>
    <source>
        <strain>ATCC 35089 / DSM 1224 / JCM 13029 / OCM 148 / SB</strain>
    </source>
</reference>
<protein>
    <recommendedName>
        <fullName evidence="1">CDP-archaeol synthase</fullName>
        <ecNumber evidence="1">2.7.7.67</ecNumber>
    </recommendedName>
    <alternativeName>
        <fullName evidence="1">CDP-2,3-bis-(O-geranylgeranyl)-sn-glycerol synthase</fullName>
    </alternativeName>
</protein>
<accession>A6UQY1</accession>
<dbReference type="EC" id="2.7.7.67" evidence="1"/>
<dbReference type="EMBL" id="CP000742">
    <property type="protein sequence ID" value="ABR54903.1"/>
    <property type="molecule type" value="Genomic_DNA"/>
</dbReference>
<dbReference type="RefSeq" id="WP_012065832.1">
    <property type="nucleotide sequence ID" value="NC_009634.1"/>
</dbReference>
<dbReference type="SMR" id="A6UQY1"/>
<dbReference type="STRING" id="406327.Mevan_1000"/>
<dbReference type="GeneID" id="5325692"/>
<dbReference type="KEGG" id="mvn:Mevan_1000"/>
<dbReference type="eggNOG" id="arCOG04106">
    <property type="taxonomic scope" value="Archaea"/>
</dbReference>
<dbReference type="HOGENOM" id="CLU_105710_0_0_2"/>
<dbReference type="OrthoDB" id="45383at2157"/>
<dbReference type="UniPathway" id="UPA00940"/>
<dbReference type="Proteomes" id="UP000001107">
    <property type="component" value="Chromosome"/>
</dbReference>
<dbReference type="GO" id="GO:0005886">
    <property type="term" value="C:plasma membrane"/>
    <property type="evidence" value="ECO:0007669"/>
    <property type="project" value="UniProtKB-SubCell"/>
</dbReference>
<dbReference type="GO" id="GO:0043338">
    <property type="term" value="F:CDP-2,3-bis-(O-geranylgeranyl)-sn-glycerol synthase activity"/>
    <property type="evidence" value="ECO:0007669"/>
    <property type="project" value="UniProtKB-EC"/>
</dbReference>
<dbReference type="GO" id="GO:0046474">
    <property type="term" value="P:glycerophospholipid biosynthetic process"/>
    <property type="evidence" value="ECO:0007669"/>
    <property type="project" value="UniProtKB-UniRule"/>
</dbReference>
<dbReference type="HAMAP" id="MF_01117">
    <property type="entry name" value="CDP_archaeol_synth"/>
    <property type="match status" value="1"/>
</dbReference>
<dbReference type="InterPro" id="IPR032690">
    <property type="entry name" value="CarS"/>
</dbReference>
<dbReference type="InterPro" id="IPR002726">
    <property type="entry name" value="CarS_archaea"/>
</dbReference>
<dbReference type="NCBIfam" id="NF003114">
    <property type="entry name" value="PRK04032.1"/>
    <property type="match status" value="1"/>
</dbReference>
<dbReference type="PANTHER" id="PTHR39650">
    <property type="entry name" value="CDP-ARCHAEOL SYNTHASE"/>
    <property type="match status" value="1"/>
</dbReference>
<dbReference type="PANTHER" id="PTHR39650:SF1">
    <property type="entry name" value="CDP-ARCHAEOL SYNTHASE"/>
    <property type="match status" value="1"/>
</dbReference>
<dbReference type="Pfam" id="PF01864">
    <property type="entry name" value="CarS-like"/>
    <property type="match status" value="1"/>
</dbReference>
<organism>
    <name type="scientific">Methanococcus vannielii (strain ATCC 35089 / DSM 1224 / JCM 13029 / OCM 148 / SB)</name>
    <dbReference type="NCBI Taxonomy" id="406327"/>
    <lineage>
        <taxon>Archaea</taxon>
        <taxon>Methanobacteriati</taxon>
        <taxon>Methanobacteriota</taxon>
        <taxon>Methanomada group</taxon>
        <taxon>Methanococci</taxon>
        <taxon>Methanococcales</taxon>
        <taxon>Methanococcaceae</taxon>
        <taxon>Methanococcus</taxon>
    </lineage>
</organism>
<evidence type="ECO:0000255" key="1">
    <source>
        <dbReference type="HAMAP-Rule" id="MF_01117"/>
    </source>
</evidence>